<protein>
    <recommendedName>
        <fullName evidence="1">Pimeloyl-[acyl-carrier protein] methyl ester esterase</fullName>
        <ecNumber evidence="1">3.1.1.85</ecNumber>
    </recommendedName>
    <alternativeName>
        <fullName evidence="1">Biotin synthesis protein BioH</fullName>
    </alternativeName>
    <alternativeName>
        <fullName evidence="1">Carboxylesterase BioH</fullName>
    </alternativeName>
</protein>
<reference key="1">
    <citation type="journal article" date="2003" name="J. Bacteriol.">
        <title>Comparative analyses of the complete genome sequences of Pierce's disease and citrus variegated chlorosis strains of Xylella fastidiosa.</title>
        <authorList>
            <person name="Van Sluys M.A."/>
            <person name="de Oliveira M.C."/>
            <person name="Monteiro-Vitorello C.B."/>
            <person name="Miyaki C.Y."/>
            <person name="Furlan L.R."/>
            <person name="Camargo L.E.A."/>
            <person name="da Silva A.C.R."/>
            <person name="Moon D.H."/>
            <person name="Takita M.A."/>
            <person name="Lemos E.G.M."/>
            <person name="Machado M.A."/>
            <person name="Ferro M.I.T."/>
            <person name="da Silva F.R."/>
            <person name="Goldman M.H.S."/>
            <person name="Goldman G.H."/>
            <person name="Lemos M.V.F."/>
            <person name="El-Dorry H."/>
            <person name="Tsai S.M."/>
            <person name="Carrer H."/>
            <person name="Carraro D.M."/>
            <person name="de Oliveira R.C."/>
            <person name="Nunes L.R."/>
            <person name="Siqueira W.J."/>
            <person name="Coutinho L.L."/>
            <person name="Kimura E.T."/>
            <person name="Ferro E.S."/>
            <person name="Harakava R."/>
            <person name="Kuramae E.E."/>
            <person name="Marino C.L."/>
            <person name="Giglioti E."/>
            <person name="Abreu I.L."/>
            <person name="Alves L.M.C."/>
            <person name="do Amaral A.M."/>
            <person name="Baia G.S."/>
            <person name="Blanco S.R."/>
            <person name="Brito M.S."/>
            <person name="Cannavan F.S."/>
            <person name="Celestino A.V."/>
            <person name="da Cunha A.F."/>
            <person name="Fenille R.C."/>
            <person name="Ferro J.A."/>
            <person name="Formighieri E.F."/>
            <person name="Kishi L.T."/>
            <person name="Leoni S.G."/>
            <person name="Oliveira A.R."/>
            <person name="Rosa V.E. Jr."/>
            <person name="Sassaki F.T."/>
            <person name="Sena J.A.D."/>
            <person name="de Souza A.A."/>
            <person name="Truffi D."/>
            <person name="Tsukumo F."/>
            <person name="Yanai G.M."/>
            <person name="Zaros L.G."/>
            <person name="Civerolo E.L."/>
            <person name="Simpson A.J.G."/>
            <person name="Almeida N.F. Jr."/>
            <person name="Setubal J.C."/>
            <person name="Kitajima J.P."/>
        </authorList>
    </citation>
    <scope>NUCLEOTIDE SEQUENCE [LARGE SCALE GENOMIC DNA]</scope>
    <source>
        <strain>Temecula1 / ATCC 700964</strain>
    </source>
</reference>
<sequence>MYIEVTGYGPALVLIHGWAMHSGVFAPLVEQLRPHHTLYLVDLPGHGYNHTTPTPLALPQVVHAIAAATPPAVWLGWSLGGLFALHAAATLPQVRGLIMLAATPCFVRREDWPHAVEVSILTQFAQDLKQNYTETINRFLALDTLGSTHAQSELRQLRKILNARHTPNTATLQAGLELLAHTDLRRALIDLTPPSLWIAGQRDRLVPAASIQAATVLAPSDQTELLTITGGGHAPFLSHANQMTAALQHFIATLP</sequence>
<feature type="chain" id="PRO_0000204505" description="Pimeloyl-[acyl-carrier protein] methyl ester esterase">
    <location>
        <begin position="1"/>
        <end position="255"/>
    </location>
</feature>
<feature type="active site" description="Nucleophile" evidence="1">
    <location>
        <position position="78"/>
    </location>
</feature>
<feature type="active site" evidence="1">
    <location>
        <position position="203"/>
    </location>
</feature>
<feature type="active site" evidence="1">
    <location>
        <position position="233"/>
    </location>
</feature>
<feature type="binding site" evidence="1">
    <location>
        <position position="18"/>
    </location>
    <ligand>
        <name>substrate</name>
    </ligand>
</feature>
<feature type="binding site" evidence="1">
    <location>
        <begin position="78"/>
        <end position="79"/>
    </location>
    <ligand>
        <name>substrate</name>
    </ligand>
</feature>
<feature type="binding site" evidence="1">
    <location>
        <begin position="139"/>
        <end position="143"/>
    </location>
    <ligand>
        <name>substrate</name>
    </ligand>
</feature>
<feature type="binding site" evidence="1">
    <location>
        <position position="233"/>
    </location>
    <ligand>
        <name>substrate</name>
    </ligand>
</feature>
<comment type="function">
    <text evidence="1">The physiological role of BioH is to remove the methyl group introduced by BioC when the pimeloyl moiety is complete. It allows to synthesize pimeloyl-ACP via the fatty acid synthetic pathway through the hydrolysis of the ester bonds of pimeloyl-ACP esters.</text>
</comment>
<comment type="catalytic activity">
    <reaction evidence="1">
        <text>6-carboxyhexanoyl-[ACP] methyl ester + H2O = 6-carboxyhexanoyl-[ACP] + methanol + H(+)</text>
        <dbReference type="Rhea" id="RHEA:42700"/>
        <dbReference type="Rhea" id="RHEA-COMP:9955"/>
        <dbReference type="Rhea" id="RHEA-COMP:10186"/>
        <dbReference type="ChEBI" id="CHEBI:15377"/>
        <dbReference type="ChEBI" id="CHEBI:15378"/>
        <dbReference type="ChEBI" id="CHEBI:17790"/>
        <dbReference type="ChEBI" id="CHEBI:78846"/>
        <dbReference type="ChEBI" id="CHEBI:82735"/>
        <dbReference type="EC" id="3.1.1.85"/>
    </reaction>
</comment>
<comment type="pathway">
    <text evidence="1">Cofactor biosynthesis; biotin biosynthesis.</text>
</comment>
<comment type="subunit">
    <text evidence="1">Monomer.</text>
</comment>
<comment type="subcellular location">
    <subcellularLocation>
        <location evidence="1">Cytoplasm</location>
    </subcellularLocation>
</comment>
<comment type="similarity">
    <text evidence="1">Belongs to the AB hydrolase superfamily. Carboxylesterase BioH family.</text>
</comment>
<keyword id="KW-0093">Biotin biosynthesis</keyword>
<keyword id="KW-0963">Cytoplasm</keyword>
<keyword id="KW-0378">Hydrolase</keyword>
<keyword id="KW-1185">Reference proteome</keyword>
<keyword id="KW-0719">Serine esterase</keyword>
<gene>
    <name evidence="1" type="primary">bioH</name>
    <name type="ordered locus">PD_0597</name>
</gene>
<evidence type="ECO:0000255" key="1">
    <source>
        <dbReference type="HAMAP-Rule" id="MF_01260"/>
    </source>
</evidence>
<proteinExistence type="inferred from homology"/>
<name>BIOH_XYLFT</name>
<organism>
    <name type="scientific">Xylella fastidiosa (strain Temecula1 / ATCC 700964)</name>
    <dbReference type="NCBI Taxonomy" id="183190"/>
    <lineage>
        <taxon>Bacteria</taxon>
        <taxon>Pseudomonadati</taxon>
        <taxon>Pseudomonadota</taxon>
        <taxon>Gammaproteobacteria</taxon>
        <taxon>Lysobacterales</taxon>
        <taxon>Lysobacteraceae</taxon>
        <taxon>Xylella</taxon>
    </lineage>
</organism>
<accession>Q87DT3</accession>
<dbReference type="EC" id="3.1.1.85" evidence="1"/>
<dbReference type="EMBL" id="AE009442">
    <property type="protein sequence ID" value="AAO28470.1"/>
    <property type="molecule type" value="Genomic_DNA"/>
</dbReference>
<dbReference type="RefSeq" id="WP_004090643.1">
    <property type="nucleotide sequence ID" value="NC_004556.1"/>
</dbReference>
<dbReference type="SMR" id="Q87DT3"/>
<dbReference type="ESTHER" id="xylfa-XF1356">
    <property type="family name" value="BioH"/>
</dbReference>
<dbReference type="GeneID" id="93904312"/>
<dbReference type="KEGG" id="xft:PD_0597"/>
<dbReference type="HOGENOM" id="CLU_020336_12_2_6"/>
<dbReference type="UniPathway" id="UPA00078"/>
<dbReference type="Proteomes" id="UP000002516">
    <property type="component" value="Chromosome"/>
</dbReference>
<dbReference type="GO" id="GO:0005737">
    <property type="term" value="C:cytoplasm"/>
    <property type="evidence" value="ECO:0007669"/>
    <property type="project" value="UniProtKB-SubCell"/>
</dbReference>
<dbReference type="GO" id="GO:0090499">
    <property type="term" value="F:pimelyl-[acyl-carrier protein] methyl ester esterase activity"/>
    <property type="evidence" value="ECO:0007669"/>
    <property type="project" value="UniProtKB-EC"/>
</dbReference>
<dbReference type="GO" id="GO:0009102">
    <property type="term" value="P:biotin biosynthetic process"/>
    <property type="evidence" value="ECO:0007669"/>
    <property type="project" value="UniProtKB-UniRule"/>
</dbReference>
<dbReference type="Gene3D" id="3.40.50.1820">
    <property type="entry name" value="alpha/beta hydrolase"/>
    <property type="match status" value="1"/>
</dbReference>
<dbReference type="HAMAP" id="MF_01260">
    <property type="entry name" value="Carboxylester"/>
    <property type="match status" value="1"/>
</dbReference>
<dbReference type="InterPro" id="IPR000073">
    <property type="entry name" value="AB_hydrolase_1"/>
</dbReference>
<dbReference type="InterPro" id="IPR029058">
    <property type="entry name" value="AB_hydrolase_fold"/>
</dbReference>
<dbReference type="InterPro" id="IPR010076">
    <property type="entry name" value="BioH"/>
</dbReference>
<dbReference type="InterPro" id="IPR050228">
    <property type="entry name" value="Carboxylesterase_BioH"/>
</dbReference>
<dbReference type="NCBIfam" id="TIGR01738">
    <property type="entry name" value="bioH"/>
    <property type="match status" value="1"/>
</dbReference>
<dbReference type="PANTHER" id="PTHR43194">
    <property type="entry name" value="HYDROLASE ALPHA/BETA FOLD FAMILY"/>
    <property type="match status" value="1"/>
</dbReference>
<dbReference type="PANTHER" id="PTHR43194:SF5">
    <property type="entry name" value="PIMELOYL-[ACYL-CARRIER PROTEIN] METHYL ESTER ESTERASE"/>
    <property type="match status" value="1"/>
</dbReference>
<dbReference type="Pfam" id="PF00561">
    <property type="entry name" value="Abhydrolase_1"/>
    <property type="match status" value="1"/>
</dbReference>
<dbReference type="SUPFAM" id="SSF53474">
    <property type="entry name" value="alpha/beta-Hydrolases"/>
    <property type="match status" value="1"/>
</dbReference>